<accession>A3QP01</accession>
<comment type="function">
    <text evidence="1">Putative taste receptor. TAS1R2/TAS1R3 recognizes diverse natural and synthetic sweeteners (By similarity).</text>
</comment>
<comment type="subunit">
    <text evidence="1">Forms heterodimers with TAS1R3.</text>
</comment>
<comment type="subcellular location">
    <subcellularLocation>
        <location evidence="1">Cell membrane</location>
        <topology evidence="1">Multi-pass membrane protein</topology>
    </subcellularLocation>
</comment>
<comment type="similarity">
    <text evidence="3">Belongs to the G-protein coupled receptor 3 family. TAS1R subfamily.</text>
</comment>
<gene>
    <name type="primary">TAS1R2</name>
</gene>
<organism>
    <name type="scientific">Macaca mulatta</name>
    <name type="common">Rhesus macaque</name>
    <dbReference type="NCBI Taxonomy" id="9544"/>
    <lineage>
        <taxon>Eukaryota</taxon>
        <taxon>Metazoa</taxon>
        <taxon>Chordata</taxon>
        <taxon>Craniata</taxon>
        <taxon>Vertebrata</taxon>
        <taxon>Euteleostomi</taxon>
        <taxon>Mammalia</taxon>
        <taxon>Eutheria</taxon>
        <taxon>Euarchontoglires</taxon>
        <taxon>Primates</taxon>
        <taxon>Haplorrhini</taxon>
        <taxon>Catarrhini</taxon>
        <taxon>Cercopithecidae</taxon>
        <taxon>Cercopithecinae</taxon>
        <taxon>Macaca</taxon>
    </lineage>
</organism>
<feature type="signal peptide" evidence="2">
    <location>
        <begin position="1"/>
        <end position="19"/>
    </location>
</feature>
<feature type="chain" id="PRO_0000285552" description="Taste receptor type 1 member 2">
    <location>
        <begin position="20"/>
        <end position="839"/>
    </location>
</feature>
<feature type="topological domain" description="Extracellular" evidence="2">
    <location>
        <begin position="20"/>
        <end position="566"/>
    </location>
</feature>
<feature type="transmembrane region" description="Helical; Name=1" evidence="2">
    <location>
        <begin position="567"/>
        <end position="587"/>
    </location>
</feature>
<feature type="topological domain" description="Cytoplasmic" evidence="2">
    <location>
        <begin position="588"/>
        <end position="602"/>
    </location>
</feature>
<feature type="transmembrane region" description="Helical; Name=2" evidence="2">
    <location>
        <begin position="603"/>
        <end position="623"/>
    </location>
</feature>
<feature type="topological domain" description="Extracellular" evidence="2">
    <location>
        <begin position="624"/>
        <end position="635"/>
    </location>
</feature>
<feature type="transmembrane region" description="Helical; Name=3" evidence="2">
    <location>
        <begin position="636"/>
        <end position="656"/>
    </location>
</feature>
<feature type="topological domain" description="Cytoplasmic" evidence="2">
    <location>
        <begin position="657"/>
        <end position="681"/>
    </location>
</feature>
<feature type="transmembrane region" description="Helical; Name=4" evidence="2">
    <location>
        <begin position="682"/>
        <end position="702"/>
    </location>
</feature>
<feature type="topological domain" description="Extracellular" evidence="2">
    <location>
        <begin position="703"/>
        <end position="727"/>
    </location>
</feature>
<feature type="transmembrane region" description="Helical; Name=5" evidence="2">
    <location>
        <begin position="728"/>
        <end position="748"/>
    </location>
</feature>
<feature type="topological domain" description="Cytoplasmic" evidence="2">
    <location>
        <begin position="749"/>
        <end position="760"/>
    </location>
</feature>
<feature type="transmembrane region" description="Helical; Name=6" evidence="2">
    <location>
        <begin position="761"/>
        <end position="781"/>
    </location>
</feature>
<feature type="topological domain" description="Extracellular" evidence="2">
    <location>
        <begin position="782"/>
        <end position="784"/>
    </location>
</feature>
<feature type="transmembrane region" description="Helical; Name=7" evidence="2">
    <location>
        <begin position="785"/>
        <end position="805"/>
    </location>
</feature>
<feature type="topological domain" description="Cytoplasmic" evidence="2">
    <location>
        <begin position="806"/>
        <end position="839"/>
    </location>
</feature>
<feature type="glycosylation site" description="N-linked (GlcNAc...) asparagine" evidence="2">
    <location>
        <position position="84"/>
    </location>
</feature>
<feature type="glycosylation site" description="N-linked (GlcNAc...) asparagine" evidence="2">
    <location>
        <position position="127"/>
    </location>
</feature>
<feature type="glycosylation site" description="N-linked (GlcNAc...) asparagine" evidence="2">
    <location>
        <position position="248"/>
    </location>
</feature>
<feature type="glycosylation site" description="N-linked (GlcNAc...) asparagine" evidence="2">
    <location>
        <position position="292"/>
    </location>
</feature>
<feature type="glycosylation site" description="N-linked (GlcNAc...) asparagine" evidence="2">
    <location>
        <position position="312"/>
    </location>
</feature>
<feature type="glycosylation site" description="N-linked (GlcNAc...) asparagine" evidence="2">
    <location>
        <position position="368"/>
    </location>
</feature>
<feature type="glycosylation site" description="N-linked (GlcNAc...) asparagine" evidence="2">
    <location>
        <position position="428"/>
    </location>
</feature>
<feature type="glycosylation site" description="N-linked (GlcNAc...) asparagine" evidence="2">
    <location>
        <position position="487"/>
    </location>
</feature>
<feature type="glycosylation site" description="N-linked (GlcNAc...) asparagine" evidence="2">
    <location>
        <position position="527"/>
    </location>
</feature>
<protein>
    <recommendedName>
        <fullName>Taste receptor type 1 member 2</fullName>
    </recommendedName>
    <alternativeName>
        <fullName>Sweet taste receptor T1R2</fullName>
    </alternativeName>
</protein>
<sequence length="839" mass="95059">MRPRATTICSLFFLLRVLAEPAKNSDFYLPGDYLLGGLFTLHANMKGIVHLDYLQVPMCKEYETKVIGYNLMQAMRFAVEEINNDSSLLPDVLLGYEMVDVCYVSNNVQPVLYFLAQEDDLLPIQENYSNYVPRVVAVIGPDNSDAVMTVANFLSLFLLPQITYSAISDELRDKVRFPALLRTAPSADHHIEAMVQLMLHFRWNWIIVLVSGDTYGRDNGQLLGDRLARGDICIAFQETLPTVQPNQNMTSEERQRLVTIVDKLQQSTARVVVVFSPDLTLYNFFNEVLRQNFTGAVWIASESWAIDPVLHNLTELRHMGTFLGITIQSVPIPGFSEFRVRDPQAGPPPLSRTSQRSTCNQECDSCLNGTLSFNNVLRLSGERVVYSVYSAVYAVAHALHSLLGCDHGTCTKREVYPWQLLKEIWKVNFTLLDHEISFDPQGDMALHLEIVQWQWGLSQNPFQSVASYYPLQRQLKKIQDISWHTINNTIPVSMCSKRCQSGQKKKPVGIHICCFECIDCLPGTFLNQTEDEFECQACPSNEWSHQSEASCFKRRLAFLEWHEAPTIVVALLAALGFLSTLAILVIFWRHFQTPMVRSAGGPMCFLMLTLLLVAYMVVPVYVGPPKVSTCFCRQALFPLCFTICISCIAVRSFQIVCVFKMASRFPRAYSYWVRYQGPYVSMAFITVLKMVTVVIGMLATGLNPTTRIDPDDPKIMIVSCNPNYRNSLFFNTGLDLLLSVVGFSFAYMGKELPTNYNEAKFITLSMTFYFTSSVSLCTFMSAYNGVLVTIMDLLVTVLNLLAISLGYFGPKCYMILFYPERNTPAYFNSMIQGYTMRRD</sequence>
<evidence type="ECO:0000250" key="1"/>
<evidence type="ECO:0000255" key="2"/>
<evidence type="ECO:0000305" key="3"/>
<proteinExistence type="inferred from homology"/>
<reference key="1">
    <citation type="submission" date="2006-02" db="EMBL/GenBank/DDBJ databases">
        <title>Sweet receptor gene variation and aspartame blindness in both primates and non-primates.</title>
        <authorList>
            <person name="Li X."/>
            <person name="Wong E.W."/>
            <person name="Li W."/>
            <person name="Lim R."/>
            <person name="Mascioli K.J."/>
            <person name="Maehashi K."/>
            <person name="Bachmanov A.A."/>
            <person name="Tordoff M.G."/>
            <person name="Beauchamp G.K."/>
            <person name="Reed D.R."/>
        </authorList>
    </citation>
    <scope>NUCLEOTIDE SEQUENCE [GENOMIC DNA]</scope>
</reference>
<name>TS1R2_MACMU</name>
<keyword id="KW-1003">Cell membrane</keyword>
<keyword id="KW-0297">G-protein coupled receptor</keyword>
<keyword id="KW-0325">Glycoprotein</keyword>
<keyword id="KW-0472">Membrane</keyword>
<keyword id="KW-0675">Receptor</keyword>
<keyword id="KW-1185">Reference proteome</keyword>
<keyword id="KW-0716">Sensory transduction</keyword>
<keyword id="KW-0732">Signal</keyword>
<keyword id="KW-0919">Taste</keyword>
<keyword id="KW-0807">Transducer</keyword>
<keyword id="KW-0812">Transmembrane</keyword>
<keyword id="KW-1133">Transmembrane helix</keyword>
<dbReference type="EMBL" id="DQ386298">
    <property type="protein sequence ID" value="ABD37678.1"/>
    <property type="molecule type" value="Genomic_DNA"/>
</dbReference>
<dbReference type="RefSeq" id="NP_001121561.1">
    <property type="nucleotide sequence ID" value="NM_001128089.1"/>
</dbReference>
<dbReference type="SMR" id="A3QP01"/>
<dbReference type="FunCoup" id="A3QP01">
    <property type="interactions" value="126"/>
</dbReference>
<dbReference type="STRING" id="9544.ENSMMUP00000003982"/>
<dbReference type="GlyCosmos" id="A3QP01">
    <property type="glycosylation" value="9 sites, No reported glycans"/>
</dbReference>
<dbReference type="PaxDb" id="9544-ENSMMUP00000003982"/>
<dbReference type="GeneID" id="714666"/>
<dbReference type="KEGG" id="mcc:714666"/>
<dbReference type="CTD" id="80834"/>
<dbReference type="eggNOG" id="KOG1056">
    <property type="taxonomic scope" value="Eukaryota"/>
</dbReference>
<dbReference type="InParanoid" id="A3QP01"/>
<dbReference type="OrthoDB" id="5984008at2759"/>
<dbReference type="Proteomes" id="UP000006718">
    <property type="component" value="Unassembled WGS sequence"/>
</dbReference>
<dbReference type="GO" id="GO:0005886">
    <property type="term" value="C:plasma membrane"/>
    <property type="evidence" value="ECO:0007669"/>
    <property type="project" value="UniProtKB-SubCell"/>
</dbReference>
<dbReference type="GO" id="GO:0003842">
    <property type="term" value="F:1-pyrroline-5-carboxylate dehydrogenase activity"/>
    <property type="evidence" value="ECO:0000318"/>
    <property type="project" value="GO_Central"/>
</dbReference>
<dbReference type="GO" id="GO:0004930">
    <property type="term" value="F:G protein-coupled receptor activity"/>
    <property type="evidence" value="ECO:0007669"/>
    <property type="project" value="UniProtKB-KW"/>
</dbReference>
<dbReference type="GO" id="GO:0050909">
    <property type="term" value="P:sensory perception of taste"/>
    <property type="evidence" value="ECO:0007669"/>
    <property type="project" value="UniProtKB-KW"/>
</dbReference>
<dbReference type="CDD" id="cd15288">
    <property type="entry name" value="7tmC_TAS1R2"/>
    <property type="match status" value="1"/>
</dbReference>
<dbReference type="CDD" id="cd06363">
    <property type="entry name" value="PBP1_taste_receptor"/>
    <property type="match status" value="1"/>
</dbReference>
<dbReference type="FunFam" id="3.40.50.2300:FF:000016">
    <property type="entry name" value="Taste 1 receptor member 2"/>
    <property type="match status" value="1"/>
</dbReference>
<dbReference type="FunFam" id="2.10.50.30:FF:000004">
    <property type="entry name" value="Taste receptor type 1 member 3-like protein"/>
    <property type="match status" value="1"/>
</dbReference>
<dbReference type="Gene3D" id="3.40.50.2300">
    <property type="match status" value="2"/>
</dbReference>
<dbReference type="Gene3D" id="2.10.50.30">
    <property type="entry name" value="GPCR, family 3, nine cysteines domain"/>
    <property type="match status" value="1"/>
</dbReference>
<dbReference type="InterPro" id="IPR001828">
    <property type="entry name" value="ANF_lig-bd_rcpt"/>
</dbReference>
<dbReference type="InterPro" id="IPR000337">
    <property type="entry name" value="GPCR_3"/>
</dbReference>
<dbReference type="InterPro" id="IPR011500">
    <property type="entry name" value="GPCR_3_9-Cys_dom"/>
</dbReference>
<dbReference type="InterPro" id="IPR038550">
    <property type="entry name" value="GPCR_3_9-Cys_sf"/>
</dbReference>
<dbReference type="InterPro" id="IPR017978">
    <property type="entry name" value="GPCR_3_C"/>
</dbReference>
<dbReference type="InterPro" id="IPR000068">
    <property type="entry name" value="GPCR_3_Ca_sens_rcpt-rel"/>
</dbReference>
<dbReference type="InterPro" id="IPR017979">
    <property type="entry name" value="GPCR_3_CS"/>
</dbReference>
<dbReference type="InterPro" id="IPR028082">
    <property type="entry name" value="Peripla_BP_I"/>
</dbReference>
<dbReference type="PANTHER" id="PTHR24061">
    <property type="entry name" value="CALCIUM-SENSING RECEPTOR-RELATED"/>
    <property type="match status" value="1"/>
</dbReference>
<dbReference type="PANTHER" id="PTHR24061:SF517">
    <property type="entry name" value="TASTE RECEPTOR TYPE 1 MEMBER 2"/>
    <property type="match status" value="1"/>
</dbReference>
<dbReference type="Pfam" id="PF00003">
    <property type="entry name" value="7tm_3"/>
    <property type="match status" value="1"/>
</dbReference>
<dbReference type="Pfam" id="PF01094">
    <property type="entry name" value="ANF_receptor"/>
    <property type="match status" value="1"/>
</dbReference>
<dbReference type="Pfam" id="PF07562">
    <property type="entry name" value="NCD3G"/>
    <property type="match status" value="1"/>
</dbReference>
<dbReference type="PRINTS" id="PR00592">
    <property type="entry name" value="CASENSINGR"/>
</dbReference>
<dbReference type="PRINTS" id="PR00248">
    <property type="entry name" value="GPCRMGR"/>
</dbReference>
<dbReference type="SUPFAM" id="SSF53822">
    <property type="entry name" value="Periplasmic binding protein-like I"/>
    <property type="match status" value="1"/>
</dbReference>
<dbReference type="PROSITE" id="PS00980">
    <property type="entry name" value="G_PROTEIN_RECEP_F3_2"/>
    <property type="match status" value="1"/>
</dbReference>
<dbReference type="PROSITE" id="PS50259">
    <property type="entry name" value="G_PROTEIN_RECEP_F3_4"/>
    <property type="match status" value="1"/>
</dbReference>